<evidence type="ECO:0000255" key="1">
    <source>
        <dbReference type="HAMAP-Rule" id="MF_01147"/>
    </source>
</evidence>
<proteinExistence type="inferred from homology"/>
<reference key="1">
    <citation type="journal article" date="2004" name="Nat. Genet.">
        <title>Evidence in the Legionella pneumophila genome for exploitation of host cell functions and high genome plasticity.</title>
        <authorList>
            <person name="Cazalet C."/>
            <person name="Rusniok C."/>
            <person name="Brueggemann H."/>
            <person name="Zidane N."/>
            <person name="Magnier A."/>
            <person name="Ma L."/>
            <person name="Tichit M."/>
            <person name="Jarraud S."/>
            <person name="Bouchier C."/>
            <person name="Vandenesch F."/>
            <person name="Kunst F."/>
            <person name="Etienne J."/>
            <person name="Glaser P."/>
            <person name="Buchrieser C."/>
        </authorList>
    </citation>
    <scope>NUCLEOTIDE SEQUENCE [LARGE SCALE GENOMIC DNA]</scope>
    <source>
        <strain>Lens</strain>
    </source>
</reference>
<protein>
    <recommendedName>
        <fullName evidence="1">Phosphatidylglycerol--prolipoprotein diacylglyceryl transferase</fullName>
        <ecNumber evidence="1">2.5.1.145</ecNumber>
    </recommendedName>
</protein>
<gene>
    <name evidence="1" type="primary">lgt</name>
    <name type="ordered locus">lpl2782</name>
</gene>
<feature type="chain" id="PRO_0000172622" description="Phosphatidylglycerol--prolipoprotein diacylglyceryl transferase">
    <location>
        <begin position="1"/>
        <end position="256"/>
    </location>
</feature>
<feature type="transmembrane region" description="Helical" evidence="1">
    <location>
        <begin position="19"/>
        <end position="39"/>
    </location>
</feature>
<feature type="transmembrane region" description="Helical" evidence="1">
    <location>
        <begin position="56"/>
        <end position="76"/>
    </location>
</feature>
<feature type="transmembrane region" description="Helical" evidence="1">
    <location>
        <begin position="91"/>
        <end position="111"/>
    </location>
</feature>
<feature type="transmembrane region" description="Helical" evidence="1">
    <location>
        <begin position="231"/>
        <end position="251"/>
    </location>
</feature>
<feature type="binding site" evidence="1">
    <location>
        <position position="139"/>
    </location>
    <ligand>
        <name>a 1,2-diacyl-sn-glycero-3-phospho-(1'-sn-glycerol)</name>
        <dbReference type="ChEBI" id="CHEBI:64716"/>
    </ligand>
</feature>
<dbReference type="EC" id="2.5.1.145" evidence="1"/>
<dbReference type="EMBL" id="CR628337">
    <property type="protein sequence ID" value="CAH17025.1"/>
    <property type="molecule type" value="Genomic_DNA"/>
</dbReference>
<dbReference type="RefSeq" id="WP_011216704.1">
    <property type="nucleotide sequence ID" value="NC_006369.1"/>
</dbReference>
<dbReference type="SMR" id="Q5WSU4"/>
<dbReference type="KEGG" id="lpf:lpl2782"/>
<dbReference type="LegioList" id="lpl2782"/>
<dbReference type="HOGENOM" id="CLU_013386_1_0_6"/>
<dbReference type="UniPathway" id="UPA00664"/>
<dbReference type="Proteomes" id="UP000002517">
    <property type="component" value="Chromosome"/>
</dbReference>
<dbReference type="GO" id="GO:0005886">
    <property type="term" value="C:plasma membrane"/>
    <property type="evidence" value="ECO:0007669"/>
    <property type="project" value="UniProtKB-SubCell"/>
</dbReference>
<dbReference type="GO" id="GO:0008961">
    <property type="term" value="F:phosphatidylglycerol-prolipoprotein diacylglyceryl transferase activity"/>
    <property type="evidence" value="ECO:0007669"/>
    <property type="project" value="UniProtKB-UniRule"/>
</dbReference>
<dbReference type="GO" id="GO:0042158">
    <property type="term" value="P:lipoprotein biosynthetic process"/>
    <property type="evidence" value="ECO:0007669"/>
    <property type="project" value="UniProtKB-UniRule"/>
</dbReference>
<dbReference type="HAMAP" id="MF_01147">
    <property type="entry name" value="Lgt"/>
    <property type="match status" value="1"/>
</dbReference>
<dbReference type="InterPro" id="IPR001640">
    <property type="entry name" value="Lgt"/>
</dbReference>
<dbReference type="NCBIfam" id="TIGR00544">
    <property type="entry name" value="lgt"/>
    <property type="match status" value="1"/>
</dbReference>
<dbReference type="PANTHER" id="PTHR30589:SF0">
    <property type="entry name" value="PHOSPHATIDYLGLYCEROL--PROLIPOPROTEIN DIACYLGLYCERYL TRANSFERASE"/>
    <property type="match status" value="1"/>
</dbReference>
<dbReference type="PANTHER" id="PTHR30589">
    <property type="entry name" value="PROLIPOPROTEIN DIACYLGLYCERYL TRANSFERASE"/>
    <property type="match status" value="1"/>
</dbReference>
<dbReference type="Pfam" id="PF01790">
    <property type="entry name" value="LGT"/>
    <property type="match status" value="1"/>
</dbReference>
<dbReference type="PROSITE" id="PS01311">
    <property type="entry name" value="LGT"/>
    <property type="match status" value="1"/>
</dbReference>
<organism>
    <name type="scientific">Legionella pneumophila (strain Lens)</name>
    <dbReference type="NCBI Taxonomy" id="297245"/>
    <lineage>
        <taxon>Bacteria</taxon>
        <taxon>Pseudomonadati</taxon>
        <taxon>Pseudomonadota</taxon>
        <taxon>Gammaproteobacteria</taxon>
        <taxon>Legionellales</taxon>
        <taxon>Legionellaceae</taxon>
        <taxon>Legionella</taxon>
    </lineage>
</organism>
<accession>Q5WSU4</accession>
<sequence>MLTYPNINPIAFSLGPLKVHWYGLMYLIGFVSAWLLGYWRIKHYKLNWNNDQLSDLIFYSALGVILGGRVGYMLFYDFQEFIHHPWVLFKIWEGGMSFHGGLLGVVIAAWLFCRKYGKTFLEVGDFVAPLVPLGLAAGRLGNFINGELWGRITDVPWGMIYPHVDDQPRHPSQLYEFGLEGVALFILIWCYASKPRQQGRVSALFLMGYAICRLIAESFRQPDSQLGFVAFGWLTMGQVLSIPMLLIGIWLWWAKR</sequence>
<name>LGT_LEGPL</name>
<keyword id="KW-0997">Cell inner membrane</keyword>
<keyword id="KW-1003">Cell membrane</keyword>
<keyword id="KW-0472">Membrane</keyword>
<keyword id="KW-0808">Transferase</keyword>
<keyword id="KW-0812">Transmembrane</keyword>
<keyword id="KW-1133">Transmembrane helix</keyword>
<comment type="function">
    <text evidence="1">Catalyzes the transfer of the diacylglyceryl group from phosphatidylglycerol to the sulfhydryl group of the N-terminal cysteine of a prolipoprotein, the first step in the formation of mature lipoproteins.</text>
</comment>
<comment type="catalytic activity">
    <reaction evidence="1">
        <text>L-cysteinyl-[prolipoprotein] + a 1,2-diacyl-sn-glycero-3-phospho-(1'-sn-glycerol) = an S-1,2-diacyl-sn-glyceryl-L-cysteinyl-[prolipoprotein] + sn-glycerol 1-phosphate + H(+)</text>
        <dbReference type="Rhea" id="RHEA:56712"/>
        <dbReference type="Rhea" id="RHEA-COMP:14679"/>
        <dbReference type="Rhea" id="RHEA-COMP:14680"/>
        <dbReference type="ChEBI" id="CHEBI:15378"/>
        <dbReference type="ChEBI" id="CHEBI:29950"/>
        <dbReference type="ChEBI" id="CHEBI:57685"/>
        <dbReference type="ChEBI" id="CHEBI:64716"/>
        <dbReference type="ChEBI" id="CHEBI:140658"/>
        <dbReference type="EC" id="2.5.1.145"/>
    </reaction>
</comment>
<comment type="pathway">
    <text evidence="1">Protein modification; lipoprotein biosynthesis (diacylglyceryl transfer).</text>
</comment>
<comment type="subcellular location">
    <subcellularLocation>
        <location evidence="1">Cell inner membrane</location>
        <topology evidence="1">Multi-pass membrane protein</topology>
    </subcellularLocation>
</comment>
<comment type="similarity">
    <text evidence="1">Belongs to the Lgt family.</text>
</comment>